<keyword id="KW-0460">Magnesium</keyword>
<keyword id="KW-0479">Metal-binding</keyword>
<keyword id="KW-0784">Thiamine biosynthesis</keyword>
<keyword id="KW-0808">Transferase</keyword>
<protein>
    <recommendedName>
        <fullName evidence="1">Thiamine-phosphate synthase</fullName>
        <shortName evidence="1">TP synthase</shortName>
        <shortName evidence="1">TPS</shortName>
        <ecNumber evidence="1">2.5.1.3</ecNumber>
    </recommendedName>
    <alternativeName>
        <fullName evidence="1">Thiamine-phosphate pyrophosphorylase</fullName>
        <shortName evidence="1">TMP pyrophosphorylase</shortName>
        <shortName evidence="1">TMP-PPase</shortName>
    </alternativeName>
</protein>
<evidence type="ECO:0000255" key="1">
    <source>
        <dbReference type="HAMAP-Rule" id="MF_00097"/>
    </source>
</evidence>
<sequence length="213" mass="23338">MKREDLQLYFIMGTSNVSHQEPLVVLEKALRAGITMFQLREKGPYALTGLAYEQFARQCQQLCQHYHVPFIVNDDVDLAVRLGADGVHIGQDDEQIAIARKKMANRILGVSVHSQEELQIAIDHHADYVGIGPIFATTSKSDAQPPCGTNFLQQASKLQPNLPIVAIGGINGINADIVFQAGADGVAVISALCESEDIEQTVSIFKSLNRIKR</sequence>
<name>THIE_LYSSC</name>
<accession>B1HX34</accession>
<gene>
    <name evidence="1" type="primary">thiE</name>
    <name type="ordered locus">Bsph_4149</name>
</gene>
<comment type="function">
    <text evidence="1">Condenses 4-methyl-5-(beta-hydroxyethyl)thiazole monophosphate (THZ-P) and 2-methyl-4-amino-5-hydroxymethyl pyrimidine pyrophosphate (HMP-PP) to form thiamine monophosphate (TMP).</text>
</comment>
<comment type="catalytic activity">
    <reaction evidence="1">
        <text>2-[(2R,5Z)-2-carboxy-4-methylthiazol-5(2H)-ylidene]ethyl phosphate + 4-amino-2-methyl-5-(diphosphooxymethyl)pyrimidine + 2 H(+) = thiamine phosphate + CO2 + diphosphate</text>
        <dbReference type="Rhea" id="RHEA:47844"/>
        <dbReference type="ChEBI" id="CHEBI:15378"/>
        <dbReference type="ChEBI" id="CHEBI:16526"/>
        <dbReference type="ChEBI" id="CHEBI:33019"/>
        <dbReference type="ChEBI" id="CHEBI:37575"/>
        <dbReference type="ChEBI" id="CHEBI:57841"/>
        <dbReference type="ChEBI" id="CHEBI:62899"/>
        <dbReference type="EC" id="2.5.1.3"/>
    </reaction>
</comment>
<comment type="catalytic activity">
    <reaction evidence="1">
        <text>2-(2-carboxy-4-methylthiazol-5-yl)ethyl phosphate + 4-amino-2-methyl-5-(diphosphooxymethyl)pyrimidine + 2 H(+) = thiamine phosphate + CO2 + diphosphate</text>
        <dbReference type="Rhea" id="RHEA:47848"/>
        <dbReference type="ChEBI" id="CHEBI:15378"/>
        <dbReference type="ChEBI" id="CHEBI:16526"/>
        <dbReference type="ChEBI" id="CHEBI:33019"/>
        <dbReference type="ChEBI" id="CHEBI:37575"/>
        <dbReference type="ChEBI" id="CHEBI:57841"/>
        <dbReference type="ChEBI" id="CHEBI:62890"/>
        <dbReference type="EC" id="2.5.1.3"/>
    </reaction>
</comment>
<comment type="catalytic activity">
    <reaction evidence="1">
        <text>4-methyl-5-(2-phosphooxyethyl)-thiazole + 4-amino-2-methyl-5-(diphosphooxymethyl)pyrimidine + H(+) = thiamine phosphate + diphosphate</text>
        <dbReference type="Rhea" id="RHEA:22328"/>
        <dbReference type="ChEBI" id="CHEBI:15378"/>
        <dbReference type="ChEBI" id="CHEBI:33019"/>
        <dbReference type="ChEBI" id="CHEBI:37575"/>
        <dbReference type="ChEBI" id="CHEBI:57841"/>
        <dbReference type="ChEBI" id="CHEBI:58296"/>
        <dbReference type="EC" id="2.5.1.3"/>
    </reaction>
</comment>
<comment type="cofactor">
    <cofactor evidence="1">
        <name>Mg(2+)</name>
        <dbReference type="ChEBI" id="CHEBI:18420"/>
    </cofactor>
    <text evidence="1">Binds 1 Mg(2+) ion per subunit.</text>
</comment>
<comment type="pathway">
    <text evidence="1">Cofactor biosynthesis; thiamine diphosphate biosynthesis; thiamine phosphate from 4-amino-2-methyl-5-diphosphomethylpyrimidine and 4-methyl-5-(2-phosphoethyl)-thiazole: step 1/1.</text>
</comment>
<comment type="similarity">
    <text evidence="1">Belongs to the thiamine-phosphate synthase family.</text>
</comment>
<dbReference type="EC" id="2.5.1.3" evidence="1"/>
<dbReference type="EMBL" id="CP000817">
    <property type="protein sequence ID" value="ACA41610.1"/>
    <property type="molecule type" value="Genomic_DNA"/>
</dbReference>
<dbReference type="SMR" id="B1HX34"/>
<dbReference type="EnsemblBacteria" id="ACA41610">
    <property type="protein sequence ID" value="ACA41610"/>
    <property type="gene ID" value="Bsph_4149"/>
</dbReference>
<dbReference type="KEGG" id="lsp:Bsph_4149"/>
<dbReference type="HOGENOM" id="CLU_018272_3_2_9"/>
<dbReference type="UniPathway" id="UPA00060">
    <property type="reaction ID" value="UER00141"/>
</dbReference>
<dbReference type="Proteomes" id="UP000002164">
    <property type="component" value="Chromosome"/>
</dbReference>
<dbReference type="GO" id="GO:0005737">
    <property type="term" value="C:cytoplasm"/>
    <property type="evidence" value="ECO:0007669"/>
    <property type="project" value="TreeGrafter"/>
</dbReference>
<dbReference type="GO" id="GO:0000287">
    <property type="term" value="F:magnesium ion binding"/>
    <property type="evidence" value="ECO:0007669"/>
    <property type="project" value="UniProtKB-UniRule"/>
</dbReference>
<dbReference type="GO" id="GO:0004789">
    <property type="term" value="F:thiamine-phosphate diphosphorylase activity"/>
    <property type="evidence" value="ECO:0007669"/>
    <property type="project" value="UniProtKB-UniRule"/>
</dbReference>
<dbReference type="GO" id="GO:0009228">
    <property type="term" value="P:thiamine biosynthetic process"/>
    <property type="evidence" value="ECO:0007669"/>
    <property type="project" value="UniProtKB-KW"/>
</dbReference>
<dbReference type="GO" id="GO:0009229">
    <property type="term" value="P:thiamine diphosphate biosynthetic process"/>
    <property type="evidence" value="ECO:0007669"/>
    <property type="project" value="UniProtKB-UniRule"/>
</dbReference>
<dbReference type="CDD" id="cd00564">
    <property type="entry name" value="TMP_TenI"/>
    <property type="match status" value="1"/>
</dbReference>
<dbReference type="FunFam" id="3.20.20.70:FF:000096">
    <property type="entry name" value="Thiamine-phosphate synthase"/>
    <property type="match status" value="1"/>
</dbReference>
<dbReference type="Gene3D" id="3.20.20.70">
    <property type="entry name" value="Aldolase class I"/>
    <property type="match status" value="1"/>
</dbReference>
<dbReference type="HAMAP" id="MF_00097">
    <property type="entry name" value="TMP_synthase"/>
    <property type="match status" value="1"/>
</dbReference>
<dbReference type="InterPro" id="IPR013785">
    <property type="entry name" value="Aldolase_TIM"/>
</dbReference>
<dbReference type="InterPro" id="IPR036206">
    <property type="entry name" value="ThiamineP_synth_sf"/>
</dbReference>
<dbReference type="InterPro" id="IPR022998">
    <property type="entry name" value="ThiamineP_synth_TenI"/>
</dbReference>
<dbReference type="InterPro" id="IPR034291">
    <property type="entry name" value="TMP_synthase"/>
</dbReference>
<dbReference type="NCBIfam" id="TIGR00693">
    <property type="entry name" value="thiE"/>
    <property type="match status" value="1"/>
</dbReference>
<dbReference type="PANTHER" id="PTHR20857">
    <property type="entry name" value="THIAMINE-PHOSPHATE PYROPHOSPHORYLASE"/>
    <property type="match status" value="1"/>
</dbReference>
<dbReference type="PANTHER" id="PTHR20857:SF15">
    <property type="entry name" value="THIAMINE-PHOSPHATE SYNTHASE"/>
    <property type="match status" value="1"/>
</dbReference>
<dbReference type="Pfam" id="PF02581">
    <property type="entry name" value="TMP-TENI"/>
    <property type="match status" value="1"/>
</dbReference>
<dbReference type="SUPFAM" id="SSF51391">
    <property type="entry name" value="Thiamin phosphate synthase"/>
    <property type="match status" value="1"/>
</dbReference>
<feature type="chain" id="PRO_1000093678" description="Thiamine-phosphate synthase">
    <location>
        <begin position="1"/>
        <end position="213"/>
    </location>
</feature>
<feature type="binding site" evidence="1">
    <location>
        <begin position="38"/>
        <end position="42"/>
    </location>
    <ligand>
        <name>4-amino-2-methyl-5-(diphosphooxymethyl)pyrimidine</name>
        <dbReference type="ChEBI" id="CHEBI:57841"/>
    </ligand>
</feature>
<feature type="binding site" evidence="1">
    <location>
        <position position="73"/>
    </location>
    <ligand>
        <name>4-amino-2-methyl-5-(diphosphooxymethyl)pyrimidine</name>
        <dbReference type="ChEBI" id="CHEBI:57841"/>
    </ligand>
</feature>
<feature type="binding site" evidence="1">
    <location>
        <position position="74"/>
    </location>
    <ligand>
        <name>Mg(2+)</name>
        <dbReference type="ChEBI" id="CHEBI:18420"/>
    </ligand>
</feature>
<feature type="binding site" evidence="1">
    <location>
        <position position="93"/>
    </location>
    <ligand>
        <name>Mg(2+)</name>
        <dbReference type="ChEBI" id="CHEBI:18420"/>
    </ligand>
</feature>
<feature type="binding site" evidence="1">
    <location>
        <position position="111"/>
    </location>
    <ligand>
        <name>4-amino-2-methyl-5-(diphosphooxymethyl)pyrimidine</name>
        <dbReference type="ChEBI" id="CHEBI:57841"/>
    </ligand>
</feature>
<feature type="binding site" evidence="1">
    <location>
        <begin position="137"/>
        <end position="139"/>
    </location>
    <ligand>
        <name>2-[(2R,5Z)-2-carboxy-4-methylthiazol-5(2H)-ylidene]ethyl phosphate</name>
        <dbReference type="ChEBI" id="CHEBI:62899"/>
    </ligand>
</feature>
<feature type="binding site" evidence="1">
    <location>
        <position position="140"/>
    </location>
    <ligand>
        <name>4-amino-2-methyl-5-(diphosphooxymethyl)pyrimidine</name>
        <dbReference type="ChEBI" id="CHEBI:57841"/>
    </ligand>
</feature>
<feature type="binding site" evidence="1">
    <location>
        <position position="169"/>
    </location>
    <ligand>
        <name>2-[(2R,5Z)-2-carboxy-4-methylthiazol-5(2H)-ylidene]ethyl phosphate</name>
        <dbReference type="ChEBI" id="CHEBI:62899"/>
    </ligand>
</feature>
<feature type="binding site" evidence="1">
    <location>
        <begin position="189"/>
        <end position="190"/>
    </location>
    <ligand>
        <name>2-[(2R,5Z)-2-carboxy-4-methylthiazol-5(2H)-ylidene]ethyl phosphate</name>
        <dbReference type="ChEBI" id="CHEBI:62899"/>
    </ligand>
</feature>
<reference key="1">
    <citation type="journal article" date="2008" name="J. Bacteriol.">
        <title>Complete genome sequence of the mosquitocidal bacterium Bacillus sphaericus C3-41 and comparison with those of closely related Bacillus species.</title>
        <authorList>
            <person name="Hu X."/>
            <person name="Fan W."/>
            <person name="Han B."/>
            <person name="Liu H."/>
            <person name="Zheng D."/>
            <person name="Li Q."/>
            <person name="Dong W."/>
            <person name="Yan J."/>
            <person name="Gao M."/>
            <person name="Berry C."/>
            <person name="Yuan Z."/>
        </authorList>
    </citation>
    <scope>NUCLEOTIDE SEQUENCE [LARGE SCALE GENOMIC DNA]</scope>
    <source>
        <strain>C3-41</strain>
    </source>
</reference>
<proteinExistence type="inferred from homology"/>
<organism>
    <name type="scientific">Lysinibacillus sphaericus (strain C3-41)</name>
    <dbReference type="NCBI Taxonomy" id="444177"/>
    <lineage>
        <taxon>Bacteria</taxon>
        <taxon>Bacillati</taxon>
        <taxon>Bacillota</taxon>
        <taxon>Bacilli</taxon>
        <taxon>Bacillales</taxon>
        <taxon>Bacillaceae</taxon>
        <taxon>Lysinibacillus</taxon>
    </lineage>
</organism>